<reference key="1">
    <citation type="journal article" date="2002" name="Nucleic Acids Res.">
        <title>Genome sequence of Shigella flexneri 2a: insights into pathogenicity through comparison with genomes of Escherichia coli K12 and O157.</title>
        <authorList>
            <person name="Jin Q."/>
            <person name="Yuan Z."/>
            <person name="Xu J."/>
            <person name="Wang Y."/>
            <person name="Shen Y."/>
            <person name="Lu W."/>
            <person name="Wang J."/>
            <person name="Liu H."/>
            <person name="Yang J."/>
            <person name="Yang F."/>
            <person name="Zhang X."/>
            <person name="Zhang J."/>
            <person name="Yang G."/>
            <person name="Wu H."/>
            <person name="Qu D."/>
            <person name="Dong J."/>
            <person name="Sun L."/>
            <person name="Xue Y."/>
            <person name="Zhao A."/>
            <person name="Gao Y."/>
            <person name="Zhu J."/>
            <person name="Kan B."/>
            <person name="Ding K."/>
            <person name="Chen S."/>
            <person name="Cheng H."/>
            <person name="Yao Z."/>
            <person name="He B."/>
            <person name="Chen R."/>
            <person name="Ma D."/>
            <person name="Qiang B."/>
            <person name="Wen Y."/>
            <person name="Hou Y."/>
            <person name="Yu J."/>
        </authorList>
    </citation>
    <scope>NUCLEOTIDE SEQUENCE [LARGE SCALE GENOMIC DNA]</scope>
    <source>
        <strain>301 / Serotype 2a</strain>
    </source>
</reference>
<reference key="2">
    <citation type="journal article" date="2003" name="Infect. Immun.">
        <title>Complete genome sequence and comparative genomics of Shigella flexneri serotype 2a strain 2457T.</title>
        <authorList>
            <person name="Wei J."/>
            <person name="Goldberg M.B."/>
            <person name="Burland V."/>
            <person name="Venkatesan M.M."/>
            <person name="Deng W."/>
            <person name="Fournier G."/>
            <person name="Mayhew G.F."/>
            <person name="Plunkett G. III"/>
            <person name="Rose D.J."/>
            <person name="Darling A."/>
            <person name="Mau B."/>
            <person name="Perna N.T."/>
            <person name="Payne S.M."/>
            <person name="Runyen-Janecky L.J."/>
            <person name="Zhou S."/>
            <person name="Schwartz D.C."/>
            <person name="Blattner F.R."/>
        </authorList>
    </citation>
    <scope>NUCLEOTIDE SEQUENCE [LARGE SCALE GENOMIC DNA]</scope>
    <source>
        <strain>ATCC 700930 / 2457T / Serotype 2a</strain>
    </source>
</reference>
<evidence type="ECO:0000255" key="1">
    <source>
        <dbReference type="HAMAP-Rule" id="MF_01080"/>
    </source>
</evidence>
<organism>
    <name type="scientific">Shigella flexneri</name>
    <dbReference type="NCBI Taxonomy" id="623"/>
    <lineage>
        <taxon>Bacteria</taxon>
        <taxon>Pseudomonadati</taxon>
        <taxon>Pseudomonadota</taxon>
        <taxon>Gammaproteobacteria</taxon>
        <taxon>Enterobacterales</taxon>
        <taxon>Enterobacteriaceae</taxon>
        <taxon>Shigella</taxon>
    </lineage>
</organism>
<dbReference type="EC" id="5.4.99.25" evidence="1"/>
<dbReference type="EMBL" id="AE005674">
    <property type="protein sequence ID" value="AAN44674.1"/>
    <property type="molecule type" value="Genomic_DNA"/>
</dbReference>
<dbReference type="EMBL" id="AE014073">
    <property type="protein sequence ID" value="AAP18488.1"/>
    <property type="molecule type" value="Genomic_DNA"/>
</dbReference>
<dbReference type="RefSeq" id="NP_708967.1">
    <property type="nucleotide sequence ID" value="NC_004337.2"/>
</dbReference>
<dbReference type="RefSeq" id="WP_000089695.1">
    <property type="nucleotide sequence ID" value="NZ_WPGW01000004.1"/>
</dbReference>
<dbReference type="SMR" id="Q83MJ8"/>
<dbReference type="STRING" id="198214.SF3207"/>
<dbReference type="PaxDb" id="198214-SF3207"/>
<dbReference type="GeneID" id="1027141"/>
<dbReference type="KEGG" id="sfl:SF3207"/>
<dbReference type="KEGG" id="sfx:S3424"/>
<dbReference type="PATRIC" id="fig|198214.7.peg.3807"/>
<dbReference type="HOGENOM" id="CLU_032087_0_3_6"/>
<dbReference type="Proteomes" id="UP000001006">
    <property type="component" value="Chromosome"/>
</dbReference>
<dbReference type="Proteomes" id="UP000002673">
    <property type="component" value="Chromosome"/>
</dbReference>
<dbReference type="GO" id="GO:0003723">
    <property type="term" value="F:RNA binding"/>
    <property type="evidence" value="ECO:0007669"/>
    <property type="project" value="InterPro"/>
</dbReference>
<dbReference type="GO" id="GO:0160148">
    <property type="term" value="F:tRNA pseudouridine(55) synthase activity"/>
    <property type="evidence" value="ECO:0007669"/>
    <property type="project" value="UniProtKB-EC"/>
</dbReference>
<dbReference type="GO" id="GO:1990481">
    <property type="term" value="P:mRNA pseudouridine synthesis"/>
    <property type="evidence" value="ECO:0007669"/>
    <property type="project" value="TreeGrafter"/>
</dbReference>
<dbReference type="GO" id="GO:0031119">
    <property type="term" value="P:tRNA pseudouridine synthesis"/>
    <property type="evidence" value="ECO:0007669"/>
    <property type="project" value="UniProtKB-UniRule"/>
</dbReference>
<dbReference type="CDD" id="cd02573">
    <property type="entry name" value="PseudoU_synth_EcTruB"/>
    <property type="match status" value="1"/>
</dbReference>
<dbReference type="CDD" id="cd21152">
    <property type="entry name" value="PUA_TruB_bacterial"/>
    <property type="match status" value="1"/>
</dbReference>
<dbReference type="FunFam" id="2.30.130.10:FF:000004">
    <property type="entry name" value="tRNA pseudouridine synthase B"/>
    <property type="match status" value="1"/>
</dbReference>
<dbReference type="FunFam" id="3.30.2350.10:FF:000003">
    <property type="entry name" value="tRNA pseudouridine synthase B"/>
    <property type="match status" value="1"/>
</dbReference>
<dbReference type="Gene3D" id="3.30.2350.10">
    <property type="entry name" value="Pseudouridine synthase"/>
    <property type="match status" value="1"/>
</dbReference>
<dbReference type="Gene3D" id="2.30.130.10">
    <property type="entry name" value="PUA domain"/>
    <property type="match status" value="1"/>
</dbReference>
<dbReference type="HAMAP" id="MF_01080">
    <property type="entry name" value="TruB_bact"/>
    <property type="match status" value="1"/>
</dbReference>
<dbReference type="InterPro" id="IPR020103">
    <property type="entry name" value="PsdUridine_synth_cat_dom_sf"/>
</dbReference>
<dbReference type="InterPro" id="IPR002501">
    <property type="entry name" value="PsdUridine_synth_N"/>
</dbReference>
<dbReference type="InterPro" id="IPR015947">
    <property type="entry name" value="PUA-like_sf"/>
</dbReference>
<dbReference type="InterPro" id="IPR036974">
    <property type="entry name" value="PUA_sf"/>
</dbReference>
<dbReference type="InterPro" id="IPR014780">
    <property type="entry name" value="tRNA_psdUridine_synth_TruB"/>
</dbReference>
<dbReference type="InterPro" id="IPR015240">
    <property type="entry name" value="tRNA_sdUridine_synth_fam1_C"/>
</dbReference>
<dbReference type="InterPro" id="IPR032819">
    <property type="entry name" value="TruB_C"/>
</dbReference>
<dbReference type="NCBIfam" id="TIGR00431">
    <property type="entry name" value="TruB"/>
    <property type="match status" value="1"/>
</dbReference>
<dbReference type="PANTHER" id="PTHR13767:SF2">
    <property type="entry name" value="PSEUDOURIDYLATE SYNTHASE TRUB1"/>
    <property type="match status" value="1"/>
</dbReference>
<dbReference type="PANTHER" id="PTHR13767">
    <property type="entry name" value="TRNA-PSEUDOURIDINE SYNTHASE"/>
    <property type="match status" value="1"/>
</dbReference>
<dbReference type="Pfam" id="PF09157">
    <property type="entry name" value="TruB-C_2"/>
    <property type="match status" value="1"/>
</dbReference>
<dbReference type="Pfam" id="PF16198">
    <property type="entry name" value="TruB_C_2"/>
    <property type="match status" value="1"/>
</dbReference>
<dbReference type="Pfam" id="PF01509">
    <property type="entry name" value="TruB_N"/>
    <property type="match status" value="1"/>
</dbReference>
<dbReference type="SUPFAM" id="SSF55120">
    <property type="entry name" value="Pseudouridine synthase"/>
    <property type="match status" value="1"/>
</dbReference>
<dbReference type="SUPFAM" id="SSF88697">
    <property type="entry name" value="PUA domain-like"/>
    <property type="match status" value="1"/>
</dbReference>
<comment type="function">
    <text evidence="1">Responsible for synthesis of pseudouridine from uracil-55 in the psi GC loop of transfer RNAs.</text>
</comment>
<comment type="catalytic activity">
    <reaction evidence="1">
        <text>uridine(55) in tRNA = pseudouridine(55) in tRNA</text>
        <dbReference type="Rhea" id="RHEA:42532"/>
        <dbReference type="Rhea" id="RHEA-COMP:10101"/>
        <dbReference type="Rhea" id="RHEA-COMP:10102"/>
        <dbReference type="ChEBI" id="CHEBI:65314"/>
        <dbReference type="ChEBI" id="CHEBI:65315"/>
        <dbReference type="EC" id="5.4.99.25"/>
    </reaction>
</comment>
<comment type="similarity">
    <text evidence="1">Belongs to the pseudouridine synthase TruB family. Type 1 subfamily.</text>
</comment>
<proteinExistence type="inferred from homology"/>
<protein>
    <recommendedName>
        <fullName evidence="1">tRNA pseudouridine synthase B</fullName>
        <ecNumber evidence="1">5.4.99.25</ecNumber>
    </recommendedName>
    <alternativeName>
        <fullName evidence="1">tRNA pseudouridine(55) synthase</fullName>
        <shortName evidence="1">Psi55 synthase</shortName>
    </alternativeName>
    <alternativeName>
        <fullName evidence="1">tRNA pseudouridylate synthase</fullName>
    </alternativeName>
    <alternativeName>
        <fullName evidence="1">tRNA-uridine isomerase</fullName>
    </alternativeName>
</protein>
<keyword id="KW-0413">Isomerase</keyword>
<keyword id="KW-1185">Reference proteome</keyword>
<keyword id="KW-0819">tRNA processing</keyword>
<sequence length="314" mass="35069">MSRPRRRGRDINGVLLLDKPQGMSSNDALQKVKRIYNANRAGHTGALDPLATGMLPICLGEATKFSQYLLDSDKRYRVIARLGQRTDTSDADGQIVEERPVTFSAEQLAAALDTFRGDIEQIPSMYSALKYQGKKLYEYARQGIEVPREARPITVYELLFIRHEGNELELEIHCSKGTYIRTIIDDLGEKLGCGAHVIYLRRLAVSKYPVERIVTLEHLRELVEQAEQQDIPAAELLDPLLMPMDSPASDYPVVNLPLTSSVYFKNGNPVRTSGAPLEGLVRVTEGENGKFIGMGEIDDEGRVAPRRLVVEYPA</sequence>
<name>TRUB_SHIFL</name>
<accession>Q83MJ8</accession>
<feature type="chain" id="PRO_0000121900" description="tRNA pseudouridine synthase B">
    <location>
        <begin position="1"/>
        <end position="314"/>
    </location>
</feature>
<feature type="active site" description="Nucleophile" evidence="1">
    <location>
        <position position="48"/>
    </location>
</feature>
<feature type="binding site" evidence="1">
    <location>
        <position position="43"/>
    </location>
    <ligand>
        <name>substrate</name>
    </ligand>
</feature>
<feature type="binding site" evidence="1">
    <location>
        <position position="76"/>
    </location>
    <ligand>
        <name>substrate</name>
    </ligand>
</feature>
<feature type="binding site" evidence="1">
    <location>
        <position position="179"/>
    </location>
    <ligand>
        <name>substrate</name>
    </ligand>
</feature>
<feature type="binding site" evidence="1">
    <location>
        <position position="200"/>
    </location>
    <ligand>
        <name>substrate</name>
    </ligand>
</feature>
<gene>
    <name evidence="1" type="primary">truB</name>
    <name type="ordered locus">SF3207</name>
    <name type="ordered locus">S3424</name>
</gene>